<comment type="function">
    <text evidence="1">Joins adenosylcobinamide-GDP and alpha-ribazole to generate adenosylcobalamin (Ado-cobalamin). Also synthesizes adenosylcobalamin 5'-phosphate from adenosylcobinamide-GDP and alpha-ribazole 5'-phosphate.</text>
</comment>
<comment type="catalytic activity">
    <reaction evidence="1">
        <text>alpha-ribazole + adenosylcob(III)inamide-GDP = adenosylcob(III)alamin + GMP + H(+)</text>
        <dbReference type="Rhea" id="RHEA:16049"/>
        <dbReference type="ChEBI" id="CHEBI:10329"/>
        <dbReference type="ChEBI" id="CHEBI:15378"/>
        <dbReference type="ChEBI" id="CHEBI:18408"/>
        <dbReference type="ChEBI" id="CHEBI:58115"/>
        <dbReference type="ChEBI" id="CHEBI:60487"/>
        <dbReference type="EC" id="2.7.8.26"/>
    </reaction>
</comment>
<comment type="catalytic activity">
    <reaction evidence="1">
        <text>alpha-ribazole 5'-phosphate + adenosylcob(III)inamide-GDP = adenosylcob(III)alamin 5'-phosphate + GMP + H(+)</text>
        <dbReference type="Rhea" id="RHEA:23560"/>
        <dbReference type="ChEBI" id="CHEBI:15378"/>
        <dbReference type="ChEBI" id="CHEBI:57918"/>
        <dbReference type="ChEBI" id="CHEBI:58115"/>
        <dbReference type="ChEBI" id="CHEBI:60487"/>
        <dbReference type="ChEBI" id="CHEBI:60493"/>
        <dbReference type="EC" id="2.7.8.26"/>
    </reaction>
</comment>
<comment type="cofactor">
    <cofactor evidence="1">
        <name>Mg(2+)</name>
        <dbReference type="ChEBI" id="CHEBI:18420"/>
    </cofactor>
</comment>
<comment type="pathway">
    <text evidence="1">Cofactor biosynthesis; adenosylcobalamin biosynthesis; adenosylcobalamin from cob(II)yrinate a,c-diamide: step 7/7.</text>
</comment>
<comment type="subcellular location">
    <subcellularLocation>
        <location evidence="1">Cell membrane</location>
        <topology evidence="1">Multi-pass membrane protein</topology>
    </subcellularLocation>
</comment>
<comment type="similarity">
    <text evidence="1">Belongs to the CobS family.</text>
</comment>
<name>COBS_CLOTE</name>
<feature type="chain" id="PRO_0000146872" description="Adenosylcobinamide-GDP ribazoletransferase">
    <location>
        <begin position="1"/>
        <end position="252"/>
    </location>
</feature>
<feature type="transmembrane region" description="Helical" evidence="1">
    <location>
        <begin position="35"/>
        <end position="55"/>
    </location>
</feature>
<feature type="transmembrane region" description="Helical" evidence="1">
    <location>
        <begin position="58"/>
        <end position="78"/>
    </location>
</feature>
<feature type="transmembrane region" description="Helical" evidence="1">
    <location>
        <begin position="113"/>
        <end position="133"/>
    </location>
</feature>
<feature type="transmembrane region" description="Helical" evidence="1">
    <location>
        <begin position="139"/>
        <end position="159"/>
    </location>
</feature>
<feature type="transmembrane region" description="Helical" evidence="1">
    <location>
        <begin position="170"/>
        <end position="190"/>
    </location>
</feature>
<feature type="transmembrane region" description="Helical" evidence="1">
    <location>
        <begin position="192"/>
        <end position="212"/>
    </location>
</feature>
<feature type="transmembrane region" description="Helical" evidence="1">
    <location>
        <begin position="231"/>
        <end position="251"/>
    </location>
</feature>
<evidence type="ECO:0000255" key="1">
    <source>
        <dbReference type="HAMAP-Rule" id="MF_00719"/>
    </source>
</evidence>
<proteinExistence type="inferred from homology"/>
<organism>
    <name type="scientific">Clostridium tetani (strain Massachusetts / E88)</name>
    <dbReference type="NCBI Taxonomy" id="212717"/>
    <lineage>
        <taxon>Bacteria</taxon>
        <taxon>Bacillati</taxon>
        <taxon>Bacillota</taxon>
        <taxon>Clostridia</taxon>
        <taxon>Eubacteriales</taxon>
        <taxon>Clostridiaceae</taxon>
        <taxon>Clostridium</taxon>
    </lineage>
</organism>
<sequence length="252" mass="28305">MKYIYNFLLMIQFLTRIPVKRSLPCEKEDFRRGAAMLPLIGLIVGCIQWVVFYILSKIFPANITAIFIILVGMVLIGGLHQDGLGDIFDGFFSFKGDKEKIIEIMKDSRVGTFAVLALIFDILIKYSALSFIIENNMSYAIIITPIMSRCTLVFLFLIGKNAKKNGTGNLFIENVSVKEFIISFIFMIVPSVLLIGYKYSVIIIVVSFIITLAFLNLCNRKIGGITGDCLGANNEIVEMFTMLVFVALLYIN</sequence>
<protein>
    <recommendedName>
        <fullName evidence="1">Adenosylcobinamide-GDP ribazoletransferase</fullName>
        <ecNumber evidence="1">2.7.8.26</ecNumber>
    </recommendedName>
    <alternativeName>
        <fullName evidence="1">Cobalamin synthase</fullName>
    </alternativeName>
    <alternativeName>
        <fullName evidence="1">Cobalamin-5'-phosphate synthase</fullName>
    </alternativeName>
</protein>
<dbReference type="EC" id="2.7.8.26" evidence="1"/>
<dbReference type="EMBL" id="AE015927">
    <property type="protein sequence ID" value="AAO35321.1"/>
    <property type="molecule type" value="Genomic_DNA"/>
</dbReference>
<dbReference type="STRING" id="212717.CTC_00719"/>
<dbReference type="KEGG" id="ctc:CTC_00719"/>
<dbReference type="HOGENOM" id="CLU_057426_1_2_9"/>
<dbReference type="OrthoDB" id="9794626at2"/>
<dbReference type="UniPathway" id="UPA00148">
    <property type="reaction ID" value="UER00238"/>
</dbReference>
<dbReference type="Proteomes" id="UP000001412">
    <property type="component" value="Chromosome"/>
</dbReference>
<dbReference type="GO" id="GO:0005886">
    <property type="term" value="C:plasma membrane"/>
    <property type="evidence" value="ECO:0007669"/>
    <property type="project" value="UniProtKB-SubCell"/>
</dbReference>
<dbReference type="GO" id="GO:0051073">
    <property type="term" value="F:adenosylcobinamide-GDP ribazoletransferase activity"/>
    <property type="evidence" value="ECO:0007669"/>
    <property type="project" value="UniProtKB-UniRule"/>
</dbReference>
<dbReference type="GO" id="GO:0008818">
    <property type="term" value="F:cobalamin 5'-phosphate synthase activity"/>
    <property type="evidence" value="ECO:0007669"/>
    <property type="project" value="UniProtKB-UniRule"/>
</dbReference>
<dbReference type="GO" id="GO:0009236">
    <property type="term" value="P:cobalamin biosynthetic process"/>
    <property type="evidence" value="ECO:0007669"/>
    <property type="project" value="UniProtKB-UniRule"/>
</dbReference>
<dbReference type="HAMAP" id="MF_00719">
    <property type="entry name" value="CobS"/>
    <property type="match status" value="1"/>
</dbReference>
<dbReference type="InterPro" id="IPR003805">
    <property type="entry name" value="CobS"/>
</dbReference>
<dbReference type="NCBIfam" id="TIGR00317">
    <property type="entry name" value="cobS"/>
    <property type="match status" value="1"/>
</dbReference>
<dbReference type="PANTHER" id="PTHR34148">
    <property type="entry name" value="ADENOSYLCOBINAMIDE-GDP RIBAZOLETRANSFERASE"/>
    <property type="match status" value="1"/>
</dbReference>
<dbReference type="PANTHER" id="PTHR34148:SF1">
    <property type="entry name" value="ADENOSYLCOBINAMIDE-GDP RIBAZOLETRANSFERASE"/>
    <property type="match status" value="1"/>
</dbReference>
<dbReference type="Pfam" id="PF02654">
    <property type="entry name" value="CobS"/>
    <property type="match status" value="1"/>
</dbReference>
<gene>
    <name evidence="1" type="primary">cobS</name>
    <name type="ordered locus">CTC_00719</name>
</gene>
<reference key="1">
    <citation type="journal article" date="2003" name="Proc. Natl. Acad. Sci. U.S.A.">
        <title>The genome sequence of Clostridium tetani, the causative agent of tetanus disease.</title>
        <authorList>
            <person name="Brueggemann H."/>
            <person name="Baeumer S."/>
            <person name="Fricke W.F."/>
            <person name="Wiezer A."/>
            <person name="Liesegang H."/>
            <person name="Decker I."/>
            <person name="Herzberg C."/>
            <person name="Martinez-Arias R."/>
            <person name="Merkl R."/>
            <person name="Henne A."/>
            <person name="Gottschalk G."/>
        </authorList>
    </citation>
    <scope>NUCLEOTIDE SEQUENCE [LARGE SCALE GENOMIC DNA]</scope>
    <source>
        <strain>Massachusetts / E88</strain>
    </source>
</reference>
<keyword id="KW-1003">Cell membrane</keyword>
<keyword id="KW-0169">Cobalamin biosynthesis</keyword>
<keyword id="KW-0460">Magnesium</keyword>
<keyword id="KW-0472">Membrane</keyword>
<keyword id="KW-1185">Reference proteome</keyword>
<keyword id="KW-0808">Transferase</keyword>
<keyword id="KW-0812">Transmembrane</keyword>
<keyword id="KW-1133">Transmembrane helix</keyword>
<accession>Q897L5</accession>